<evidence type="ECO:0000255" key="1">
    <source>
        <dbReference type="HAMAP-Rule" id="MF_00963"/>
    </source>
</evidence>
<evidence type="ECO:0000256" key="2">
    <source>
        <dbReference type="SAM" id="MobiDB-lite"/>
    </source>
</evidence>
<name>SIGA_STAEQ</name>
<sequence length="368" mass="42256">MSDNQVKIKKQTIDPTLTLEDVKKQLIDKGKKEGHLSHEEIAEKLQNFEMDSDQMDDFFDQLNDNDITLVNEKDSSDTDDKINPNDLSAPPGVKINDPVRMYLKEIGRVNLLSAQEEIELAKRIEQGDEIAKSRLAEANLRLVVSIAKRYVGRGMLFLDLIQEGNMGLIKAVEKFDFSKGFKFSTYATWWIRQAITRAIADQARTIRIPVHMVETINKLIRVQRQLLQDLGRDPAPEEIGEEMDLPPEKVREILKIAQEPVSLETPIGEEDDSHLGDFIEDQEAQSPSDHAAYELLKEQLEDVLDTLTDREENVLRLRFGLDDGRTRTLEEVGKVFGVTRERIRQIEAKALRKLRHPSRSKRLKDFMD</sequence>
<gene>
    <name evidence="1" type="primary">sigA</name>
    <name type="synonym">rpoD</name>
    <name type="ordered locus">SERP1127</name>
</gene>
<reference key="1">
    <citation type="journal article" date="2005" name="J. Bacteriol.">
        <title>Insights on evolution of virulence and resistance from the complete genome analysis of an early methicillin-resistant Staphylococcus aureus strain and a biofilm-producing methicillin-resistant Staphylococcus epidermidis strain.</title>
        <authorList>
            <person name="Gill S.R."/>
            <person name="Fouts D.E."/>
            <person name="Archer G.L."/>
            <person name="Mongodin E.F."/>
            <person name="DeBoy R.T."/>
            <person name="Ravel J."/>
            <person name="Paulsen I.T."/>
            <person name="Kolonay J.F."/>
            <person name="Brinkac L.M."/>
            <person name="Beanan M.J."/>
            <person name="Dodson R.J."/>
            <person name="Daugherty S.C."/>
            <person name="Madupu R."/>
            <person name="Angiuoli S.V."/>
            <person name="Durkin A.S."/>
            <person name="Haft D.H."/>
            <person name="Vamathevan J.J."/>
            <person name="Khouri H."/>
            <person name="Utterback T.R."/>
            <person name="Lee C."/>
            <person name="Dimitrov G."/>
            <person name="Jiang L."/>
            <person name="Qin H."/>
            <person name="Weidman J."/>
            <person name="Tran K."/>
            <person name="Kang K.H."/>
            <person name="Hance I.R."/>
            <person name="Nelson K.E."/>
            <person name="Fraser C.M."/>
        </authorList>
    </citation>
    <scope>NUCLEOTIDE SEQUENCE [LARGE SCALE GENOMIC DNA]</scope>
    <source>
        <strain>ATCC 35984 / DSM 28319 / BCRC 17069 / CCUG 31568 / BM 3577 / RP62A</strain>
    </source>
</reference>
<proteinExistence type="inferred from homology"/>
<organism>
    <name type="scientific">Staphylococcus epidermidis (strain ATCC 35984 / DSM 28319 / BCRC 17069 / CCUG 31568 / BM 3577 / RP62A)</name>
    <dbReference type="NCBI Taxonomy" id="176279"/>
    <lineage>
        <taxon>Bacteria</taxon>
        <taxon>Bacillati</taxon>
        <taxon>Bacillota</taxon>
        <taxon>Bacilli</taxon>
        <taxon>Bacillales</taxon>
        <taxon>Staphylococcaceae</taxon>
        <taxon>Staphylococcus</taxon>
    </lineage>
</organism>
<accession>Q5HNY7</accession>
<keyword id="KW-0963">Cytoplasm</keyword>
<keyword id="KW-0238">DNA-binding</keyword>
<keyword id="KW-1185">Reference proteome</keyword>
<keyword id="KW-0731">Sigma factor</keyword>
<keyword id="KW-0804">Transcription</keyword>
<keyword id="KW-0805">Transcription regulation</keyword>
<dbReference type="EMBL" id="CP000029">
    <property type="protein sequence ID" value="AAW54548.1"/>
    <property type="molecule type" value="Genomic_DNA"/>
</dbReference>
<dbReference type="RefSeq" id="WP_002440071.1">
    <property type="nucleotide sequence ID" value="NC_002976.3"/>
</dbReference>
<dbReference type="SMR" id="Q5HNY7"/>
<dbReference type="STRING" id="176279.SERP1127"/>
<dbReference type="GeneID" id="50018636"/>
<dbReference type="KEGG" id="ser:SERP1127"/>
<dbReference type="eggNOG" id="COG0568">
    <property type="taxonomic scope" value="Bacteria"/>
</dbReference>
<dbReference type="HOGENOM" id="CLU_014793_3_3_9"/>
<dbReference type="Proteomes" id="UP000000531">
    <property type="component" value="Chromosome"/>
</dbReference>
<dbReference type="GO" id="GO:0005737">
    <property type="term" value="C:cytoplasm"/>
    <property type="evidence" value="ECO:0007669"/>
    <property type="project" value="UniProtKB-SubCell"/>
</dbReference>
<dbReference type="GO" id="GO:0003677">
    <property type="term" value="F:DNA binding"/>
    <property type="evidence" value="ECO:0007669"/>
    <property type="project" value="UniProtKB-UniRule"/>
</dbReference>
<dbReference type="GO" id="GO:0016987">
    <property type="term" value="F:sigma factor activity"/>
    <property type="evidence" value="ECO:0007669"/>
    <property type="project" value="UniProtKB-UniRule"/>
</dbReference>
<dbReference type="GO" id="GO:0006352">
    <property type="term" value="P:DNA-templated transcription initiation"/>
    <property type="evidence" value="ECO:0007669"/>
    <property type="project" value="UniProtKB-UniRule"/>
</dbReference>
<dbReference type="CDD" id="cd06171">
    <property type="entry name" value="Sigma70_r4"/>
    <property type="match status" value="1"/>
</dbReference>
<dbReference type="FunFam" id="1.10.10.10:FF:000002">
    <property type="entry name" value="RNA polymerase sigma factor SigA"/>
    <property type="match status" value="1"/>
</dbReference>
<dbReference type="FunFam" id="1.10.10.10:FF:000004">
    <property type="entry name" value="RNA polymerase sigma factor SigA"/>
    <property type="match status" value="1"/>
</dbReference>
<dbReference type="FunFam" id="1.10.601.10:FF:000001">
    <property type="entry name" value="RNA polymerase sigma factor SigA"/>
    <property type="match status" value="1"/>
</dbReference>
<dbReference type="Gene3D" id="1.10.601.10">
    <property type="entry name" value="RNA Polymerase Primary Sigma Factor"/>
    <property type="match status" value="2"/>
</dbReference>
<dbReference type="Gene3D" id="1.10.220.120">
    <property type="entry name" value="Sigma-70 factor, region 1.1"/>
    <property type="match status" value="1"/>
</dbReference>
<dbReference type="Gene3D" id="1.10.10.10">
    <property type="entry name" value="Winged helix-like DNA-binding domain superfamily/Winged helix DNA-binding domain"/>
    <property type="match status" value="2"/>
</dbReference>
<dbReference type="HAMAP" id="MF_00963">
    <property type="entry name" value="Sigma70_RpoD_SigA"/>
    <property type="match status" value="1"/>
</dbReference>
<dbReference type="InterPro" id="IPR014284">
    <property type="entry name" value="RNA_pol_sigma-70_dom"/>
</dbReference>
<dbReference type="InterPro" id="IPR000943">
    <property type="entry name" value="RNA_pol_sigma70"/>
</dbReference>
<dbReference type="InterPro" id="IPR009042">
    <property type="entry name" value="RNA_pol_sigma70_r1_2"/>
</dbReference>
<dbReference type="InterPro" id="IPR007627">
    <property type="entry name" value="RNA_pol_sigma70_r2"/>
</dbReference>
<dbReference type="InterPro" id="IPR007624">
    <property type="entry name" value="RNA_pol_sigma70_r3"/>
</dbReference>
<dbReference type="InterPro" id="IPR007630">
    <property type="entry name" value="RNA_pol_sigma70_r4"/>
</dbReference>
<dbReference type="InterPro" id="IPR007127">
    <property type="entry name" value="RNA_pol_sigma_70_r1_1"/>
</dbReference>
<dbReference type="InterPro" id="IPR042189">
    <property type="entry name" value="RNA_pol_sigma_70_r1_1_sf"/>
</dbReference>
<dbReference type="InterPro" id="IPR013325">
    <property type="entry name" value="RNA_pol_sigma_r2"/>
</dbReference>
<dbReference type="InterPro" id="IPR013324">
    <property type="entry name" value="RNA_pol_sigma_r3/r4-like"/>
</dbReference>
<dbReference type="InterPro" id="IPR012760">
    <property type="entry name" value="RNA_pol_sigma_RpoD_C"/>
</dbReference>
<dbReference type="InterPro" id="IPR050239">
    <property type="entry name" value="Sigma-70_RNA_pol_init_factors"/>
</dbReference>
<dbReference type="InterPro" id="IPR028630">
    <property type="entry name" value="Sigma70_RpoD"/>
</dbReference>
<dbReference type="InterPro" id="IPR036388">
    <property type="entry name" value="WH-like_DNA-bd_sf"/>
</dbReference>
<dbReference type="NCBIfam" id="NF006666">
    <property type="entry name" value="PRK09210.1"/>
    <property type="match status" value="1"/>
</dbReference>
<dbReference type="NCBIfam" id="TIGR02393">
    <property type="entry name" value="RpoD_Cterm"/>
    <property type="match status" value="1"/>
</dbReference>
<dbReference type="NCBIfam" id="TIGR02937">
    <property type="entry name" value="sigma70-ECF"/>
    <property type="match status" value="1"/>
</dbReference>
<dbReference type="PANTHER" id="PTHR30603">
    <property type="entry name" value="RNA POLYMERASE SIGMA FACTOR RPO"/>
    <property type="match status" value="1"/>
</dbReference>
<dbReference type="PANTHER" id="PTHR30603:SF60">
    <property type="entry name" value="RNA POLYMERASE SIGMA FACTOR RPOD"/>
    <property type="match status" value="1"/>
</dbReference>
<dbReference type="Pfam" id="PF03979">
    <property type="entry name" value="Sigma70_r1_1"/>
    <property type="match status" value="1"/>
</dbReference>
<dbReference type="Pfam" id="PF00140">
    <property type="entry name" value="Sigma70_r1_2"/>
    <property type="match status" value="1"/>
</dbReference>
<dbReference type="Pfam" id="PF04542">
    <property type="entry name" value="Sigma70_r2"/>
    <property type="match status" value="1"/>
</dbReference>
<dbReference type="Pfam" id="PF04539">
    <property type="entry name" value="Sigma70_r3"/>
    <property type="match status" value="1"/>
</dbReference>
<dbReference type="Pfam" id="PF04545">
    <property type="entry name" value="Sigma70_r4"/>
    <property type="match status" value="1"/>
</dbReference>
<dbReference type="PRINTS" id="PR00046">
    <property type="entry name" value="SIGMA70FCT"/>
</dbReference>
<dbReference type="SUPFAM" id="SSF88946">
    <property type="entry name" value="Sigma2 domain of RNA polymerase sigma factors"/>
    <property type="match status" value="1"/>
</dbReference>
<dbReference type="SUPFAM" id="SSF88659">
    <property type="entry name" value="Sigma3 and sigma4 domains of RNA polymerase sigma factors"/>
    <property type="match status" value="2"/>
</dbReference>
<dbReference type="PROSITE" id="PS00715">
    <property type="entry name" value="SIGMA70_1"/>
    <property type="match status" value="1"/>
</dbReference>
<dbReference type="PROSITE" id="PS00716">
    <property type="entry name" value="SIGMA70_2"/>
    <property type="match status" value="1"/>
</dbReference>
<feature type="chain" id="PRO_0000093921" description="RNA polymerase sigma factor SigA">
    <location>
        <begin position="1"/>
        <end position="368"/>
    </location>
</feature>
<feature type="DNA-binding region" description="H-T-H motif" evidence="1">
    <location>
        <begin position="329"/>
        <end position="348"/>
    </location>
</feature>
<feature type="region of interest" description="Disordered" evidence="2">
    <location>
        <begin position="71"/>
        <end position="90"/>
    </location>
</feature>
<feature type="region of interest" description="Sigma-70 factor domain-2" evidence="1">
    <location>
        <begin position="135"/>
        <end position="205"/>
    </location>
</feature>
<feature type="region of interest" description="Sigma-70 factor domain-3" evidence="1">
    <location>
        <begin position="214"/>
        <end position="290"/>
    </location>
</feature>
<feature type="region of interest" description="Sigma-70 factor domain-4" evidence="1">
    <location>
        <begin position="303"/>
        <end position="356"/>
    </location>
</feature>
<feature type="short sequence motif" description="Interaction with polymerase core subunit RpoC">
    <location>
        <begin position="159"/>
        <end position="162"/>
    </location>
</feature>
<feature type="compositionally biased region" description="Basic and acidic residues" evidence="2">
    <location>
        <begin position="71"/>
        <end position="83"/>
    </location>
</feature>
<comment type="function">
    <text evidence="1">Sigma factors are initiation factors that promote the attachment of RNA polymerase to specific initiation sites and are then released. This sigma factor is the primary sigma factor during exponential growth.</text>
</comment>
<comment type="subunit">
    <text evidence="1">Interacts transiently with the RNA polymerase catalytic core.</text>
</comment>
<comment type="subcellular location">
    <subcellularLocation>
        <location evidence="1">Cytoplasm</location>
    </subcellularLocation>
</comment>
<comment type="similarity">
    <text evidence="1">Belongs to the sigma-70 factor family. RpoD/SigA subfamily.</text>
</comment>
<protein>
    <recommendedName>
        <fullName evidence="1">RNA polymerase sigma factor SigA</fullName>
    </recommendedName>
</protein>